<organism>
    <name type="scientific">Brucella abortus (strain 2308)</name>
    <dbReference type="NCBI Taxonomy" id="359391"/>
    <lineage>
        <taxon>Bacteria</taxon>
        <taxon>Pseudomonadati</taxon>
        <taxon>Pseudomonadota</taxon>
        <taxon>Alphaproteobacteria</taxon>
        <taxon>Hyphomicrobiales</taxon>
        <taxon>Brucellaceae</taxon>
        <taxon>Brucella/Ochrobactrum group</taxon>
        <taxon>Brucella</taxon>
    </lineage>
</organism>
<proteinExistence type="inferred from homology"/>
<keyword id="KW-0963">Cytoplasm</keyword>
<keyword id="KW-0255">Endonuclease</keyword>
<keyword id="KW-0378">Hydrolase</keyword>
<keyword id="KW-0464">Manganese</keyword>
<keyword id="KW-0479">Metal-binding</keyword>
<keyword id="KW-0540">Nuclease</keyword>
<keyword id="KW-1185">Reference proteome</keyword>
<reference key="1">
    <citation type="journal article" date="2005" name="Infect. Immun.">
        <title>Whole-genome analyses of speciation events in pathogenic Brucellae.</title>
        <authorList>
            <person name="Chain P.S."/>
            <person name="Comerci D.J."/>
            <person name="Tolmasky M.E."/>
            <person name="Larimer F.W."/>
            <person name="Malfatti S.A."/>
            <person name="Vergez L.M."/>
            <person name="Aguero F."/>
            <person name="Land M.L."/>
            <person name="Ugalde R.A."/>
            <person name="Garcia E."/>
        </authorList>
    </citation>
    <scope>NUCLEOTIDE SEQUENCE [LARGE SCALE GENOMIC DNA]</scope>
    <source>
        <strain>2308</strain>
    </source>
</reference>
<comment type="function">
    <text evidence="1">Endonuclease that specifically degrades the RNA of RNA-DNA hybrids.</text>
</comment>
<comment type="catalytic activity">
    <reaction evidence="1">
        <text>Endonucleolytic cleavage to 5'-phosphomonoester.</text>
        <dbReference type="EC" id="3.1.26.4"/>
    </reaction>
</comment>
<comment type="cofactor">
    <cofactor evidence="1">
        <name>Mn(2+)</name>
        <dbReference type="ChEBI" id="CHEBI:29035"/>
    </cofactor>
    <cofactor evidence="1">
        <name>Mg(2+)</name>
        <dbReference type="ChEBI" id="CHEBI:18420"/>
    </cofactor>
    <text evidence="1">Manganese or magnesium. Binds 1 divalent metal ion per monomer in the absence of substrate. May bind a second metal ion after substrate binding.</text>
</comment>
<comment type="subcellular location">
    <subcellularLocation>
        <location evidence="1">Cytoplasm</location>
    </subcellularLocation>
</comment>
<comment type="similarity">
    <text evidence="1">Belongs to the RNase HII family.</text>
</comment>
<dbReference type="EC" id="3.1.26.4" evidence="1"/>
<dbReference type="EMBL" id="AM040264">
    <property type="protein sequence ID" value="CAJ10371.1"/>
    <property type="molecule type" value="Genomic_DNA"/>
</dbReference>
<dbReference type="RefSeq" id="WP_002963547.1">
    <property type="nucleotide sequence ID" value="NZ_KN046823.1"/>
</dbReference>
<dbReference type="SMR" id="Q2YMC3"/>
<dbReference type="STRING" id="359391.BAB1_0415"/>
<dbReference type="KEGG" id="bmf:BAB1_0415"/>
<dbReference type="HOGENOM" id="CLU_036532_3_2_5"/>
<dbReference type="PhylomeDB" id="Q2YMC3"/>
<dbReference type="Proteomes" id="UP000002719">
    <property type="component" value="Chromosome I"/>
</dbReference>
<dbReference type="GO" id="GO:0005737">
    <property type="term" value="C:cytoplasm"/>
    <property type="evidence" value="ECO:0007669"/>
    <property type="project" value="UniProtKB-SubCell"/>
</dbReference>
<dbReference type="GO" id="GO:0032299">
    <property type="term" value="C:ribonuclease H2 complex"/>
    <property type="evidence" value="ECO:0007669"/>
    <property type="project" value="TreeGrafter"/>
</dbReference>
<dbReference type="GO" id="GO:0030145">
    <property type="term" value="F:manganese ion binding"/>
    <property type="evidence" value="ECO:0007669"/>
    <property type="project" value="UniProtKB-UniRule"/>
</dbReference>
<dbReference type="GO" id="GO:0003723">
    <property type="term" value="F:RNA binding"/>
    <property type="evidence" value="ECO:0007669"/>
    <property type="project" value="InterPro"/>
</dbReference>
<dbReference type="GO" id="GO:0004523">
    <property type="term" value="F:RNA-DNA hybrid ribonuclease activity"/>
    <property type="evidence" value="ECO:0007669"/>
    <property type="project" value="UniProtKB-UniRule"/>
</dbReference>
<dbReference type="GO" id="GO:0043137">
    <property type="term" value="P:DNA replication, removal of RNA primer"/>
    <property type="evidence" value="ECO:0007669"/>
    <property type="project" value="TreeGrafter"/>
</dbReference>
<dbReference type="GO" id="GO:0006298">
    <property type="term" value="P:mismatch repair"/>
    <property type="evidence" value="ECO:0007669"/>
    <property type="project" value="TreeGrafter"/>
</dbReference>
<dbReference type="CDD" id="cd07182">
    <property type="entry name" value="RNase_HII_bacteria_HII_like"/>
    <property type="match status" value="1"/>
</dbReference>
<dbReference type="Gene3D" id="3.30.420.10">
    <property type="entry name" value="Ribonuclease H-like superfamily/Ribonuclease H"/>
    <property type="match status" value="1"/>
</dbReference>
<dbReference type="HAMAP" id="MF_00052_B">
    <property type="entry name" value="RNase_HII_B"/>
    <property type="match status" value="1"/>
</dbReference>
<dbReference type="InterPro" id="IPR022898">
    <property type="entry name" value="RNase_HII"/>
</dbReference>
<dbReference type="InterPro" id="IPR001352">
    <property type="entry name" value="RNase_HII/HIII"/>
</dbReference>
<dbReference type="InterPro" id="IPR024567">
    <property type="entry name" value="RNase_HII/HIII_dom"/>
</dbReference>
<dbReference type="InterPro" id="IPR012337">
    <property type="entry name" value="RNaseH-like_sf"/>
</dbReference>
<dbReference type="InterPro" id="IPR036397">
    <property type="entry name" value="RNaseH_sf"/>
</dbReference>
<dbReference type="NCBIfam" id="NF000595">
    <property type="entry name" value="PRK00015.1-3"/>
    <property type="match status" value="1"/>
</dbReference>
<dbReference type="PANTHER" id="PTHR10954">
    <property type="entry name" value="RIBONUCLEASE H2 SUBUNIT A"/>
    <property type="match status" value="1"/>
</dbReference>
<dbReference type="PANTHER" id="PTHR10954:SF18">
    <property type="entry name" value="RIBONUCLEASE HII"/>
    <property type="match status" value="1"/>
</dbReference>
<dbReference type="Pfam" id="PF01351">
    <property type="entry name" value="RNase_HII"/>
    <property type="match status" value="1"/>
</dbReference>
<dbReference type="SUPFAM" id="SSF53098">
    <property type="entry name" value="Ribonuclease H-like"/>
    <property type="match status" value="1"/>
</dbReference>
<dbReference type="PROSITE" id="PS51975">
    <property type="entry name" value="RNASE_H_2"/>
    <property type="match status" value="1"/>
</dbReference>
<feature type="chain" id="PRO_0000235704" description="Ribonuclease HII">
    <location>
        <begin position="1"/>
        <end position="220"/>
    </location>
</feature>
<feature type="domain" description="RNase H type-2" evidence="2">
    <location>
        <begin position="32"/>
        <end position="220"/>
    </location>
</feature>
<feature type="binding site" evidence="1">
    <location>
        <position position="38"/>
    </location>
    <ligand>
        <name>a divalent metal cation</name>
        <dbReference type="ChEBI" id="CHEBI:60240"/>
    </ligand>
</feature>
<feature type="binding site" evidence="1">
    <location>
        <position position="39"/>
    </location>
    <ligand>
        <name>a divalent metal cation</name>
        <dbReference type="ChEBI" id="CHEBI:60240"/>
    </ligand>
</feature>
<feature type="binding site" evidence="1">
    <location>
        <position position="130"/>
    </location>
    <ligand>
        <name>a divalent metal cation</name>
        <dbReference type="ChEBI" id="CHEBI:60240"/>
    </ligand>
</feature>
<gene>
    <name evidence="1" type="primary">rnhB</name>
    <name type="ordered locus">BAB1_0415</name>
</gene>
<protein>
    <recommendedName>
        <fullName evidence="1">Ribonuclease HII</fullName>
        <shortName evidence="1">RNase HII</shortName>
        <ecNumber evidence="1">3.1.26.4</ecNumber>
    </recommendedName>
</protein>
<accession>Q2YMC3</accession>
<name>RNH2_BRUA2</name>
<evidence type="ECO:0000255" key="1">
    <source>
        <dbReference type="HAMAP-Rule" id="MF_00052"/>
    </source>
</evidence>
<evidence type="ECO:0000255" key="2">
    <source>
        <dbReference type="PROSITE-ProRule" id="PRU01319"/>
    </source>
</evidence>
<sequence>MKRSASDSPLLFDLPLAPDFSQEQQLMKRGLKHIAGIDEAGRGPLAGPVVAAAVVLDQNDLPEGLDDSKRLTAARREALYEIILTKAITVSVASLSARSIDASDIRKAALEAMRRAVIGLTLKPCHALVDGRDVPPGLPCPGSALVKGDQRSVSIAAASIVAKVTRDRMMIRAGAAHPPYGLEIHAGYATQKHRAAIESEGPVPGLHRYTFAPIKGCFDC</sequence>